<sequence length="208" mass="22079">MDSKSGRSESAINIPESNSTKHKSTVVHTATKVAAVAPRGGGWRRGVSIFDFILRICALAAALAATATMGTTDQTLPFFTQFFQFQASYDDLPAFTFFVVANGIASGYLVLSLPFSIATIVRPHAAAIKLLLIIFDTVMVAFTAAAAAAAAAIVYLAHNGNSKTNWFAICQQFNDFCQRVSGAVVASFVAAVILIFLVVLSAVAIRKH</sequence>
<accession>P0DI30</accession>
<protein>
    <recommendedName>
        <fullName>Casparian strip membrane protein 2</fullName>
        <shortName>TpCASP2</shortName>
    </recommendedName>
</protein>
<dbReference type="EMBL" id="EY157937">
    <property type="status" value="NOT_ANNOTATED_CDS"/>
    <property type="molecule type" value="mRNA"/>
</dbReference>
<dbReference type="SMR" id="P0DI30"/>
<dbReference type="GO" id="GO:0005886">
    <property type="term" value="C:plasma membrane"/>
    <property type="evidence" value="ECO:0007669"/>
    <property type="project" value="UniProtKB-SubCell"/>
</dbReference>
<dbReference type="GO" id="GO:0071555">
    <property type="term" value="P:cell wall organization"/>
    <property type="evidence" value="ECO:0007669"/>
    <property type="project" value="UniProtKB-KW"/>
</dbReference>
<dbReference type="InterPro" id="IPR006459">
    <property type="entry name" value="CASP/CASPL"/>
</dbReference>
<dbReference type="InterPro" id="IPR006702">
    <property type="entry name" value="CASP_dom"/>
</dbReference>
<dbReference type="InterPro" id="IPR044173">
    <property type="entry name" value="CASPL"/>
</dbReference>
<dbReference type="NCBIfam" id="TIGR01569">
    <property type="entry name" value="A_tha_TIGR01569"/>
    <property type="match status" value="1"/>
</dbReference>
<dbReference type="PANTHER" id="PTHR36488:SF11">
    <property type="entry name" value="CASP-LIKE PROTEIN"/>
    <property type="match status" value="1"/>
</dbReference>
<dbReference type="PANTHER" id="PTHR36488">
    <property type="entry name" value="CASP-LIKE PROTEIN 1U1"/>
    <property type="match status" value="1"/>
</dbReference>
<dbReference type="Pfam" id="PF04535">
    <property type="entry name" value="CASP_dom"/>
    <property type="match status" value="1"/>
</dbReference>
<reference key="1">
    <citation type="submission" date="2007-11" db="EMBL/GenBank/DDBJ databases">
        <title>Early haustorium development in hemiparasitic Orobanchaceae.</title>
        <authorList>
            <person name="Tomilov A.A."/>
            <person name="Tomilova N.B."/>
            <person name="Matvienko M."/>
            <person name="Yoder J.I."/>
        </authorList>
    </citation>
    <scope>NUCLEOTIDE SEQUENCE [LARGE SCALE MRNA]</scope>
    <source>
        <strain>cv. TA-136</strain>
        <tissue>Root tip</tissue>
    </source>
</reference>
<reference key="2">
    <citation type="journal article" date="2014" name="Plant Physiol.">
        <title>Functional and evolutionary analysis of the CASPARIAN STRIP MEMBRANE DOMAIN PROTEIN family.</title>
        <authorList>
            <person name="Roppolo D."/>
            <person name="Boeckmann B."/>
            <person name="Pfister A."/>
            <person name="Boutet E."/>
            <person name="Rubio M.C."/>
            <person name="Denervaud-Tendon V."/>
            <person name="Vermeer J.E."/>
            <person name="Gheyselinck J."/>
            <person name="Xenarios I."/>
            <person name="Geldner N."/>
        </authorList>
    </citation>
    <scope>GENE FAMILY</scope>
    <scope>NOMENCLATURE</scope>
</reference>
<proteinExistence type="evidence at transcript level"/>
<name>CASP2_TRIPD</name>
<keyword id="KW-1003">Cell membrane</keyword>
<keyword id="KW-0961">Cell wall biogenesis/degradation</keyword>
<keyword id="KW-0472">Membrane</keyword>
<keyword id="KW-0812">Transmembrane</keyword>
<keyword id="KW-1133">Transmembrane helix</keyword>
<evidence type="ECO:0000250" key="1"/>
<evidence type="ECO:0000255" key="2"/>
<evidence type="ECO:0000256" key="3">
    <source>
        <dbReference type="SAM" id="MobiDB-lite"/>
    </source>
</evidence>
<evidence type="ECO:0000305" key="4"/>
<comment type="function">
    <text evidence="1">Regulates membrane-cell wall junctions and localized cell wall deposition. Required for establishment of the Casparian strip membrane domain (CSD) and the subsequent formation of Casparian strips, a cell wall modification of the root endodermis that determines an apoplastic barrier between the intraorganismal apoplasm and the extraorganismal apoplasm and prevents lateral diffusion (By similarity).</text>
</comment>
<comment type="subunit">
    <text evidence="1">Homodimer and heterodimers.</text>
</comment>
<comment type="subcellular location">
    <subcellularLocation>
        <location evidence="1">Cell membrane</location>
        <topology evidence="1">Multi-pass membrane protein</topology>
    </subcellularLocation>
    <text evidence="1">Very restricted localization following a belt shape within the plasma membrane which coincides with the position of the Casparian strip membrane domain in the root endodermis.</text>
</comment>
<comment type="similarity">
    <text evidence="4">Belongs to the Casparian strip membrane proteins (CASP) family.</text>
</comment>
<feature type="chain" id="PRO_0000417811" description="Casparian strip membrane protein 2">
    <location>
        <begin position="1"/>
        <end position="208"/>
    </location>
</feature>
<feature type="topological domain" description="Cytoplasmic" evidence="2">
    <location>
        <begin position="1"/>
        <end position="46"/>
    </location>
</feature>
<feature type="transmembrane region" description="Helical" evidence="2">
    <location>
        <begin position="47"/>
        <end position="67"/>
    </location>
</feature>
<feature type="topological domain" description="Extracellular" evidence="2">
    <location>
        <begin position="68"/>
        <end position="96"/>
    </location>
</feature>
<feature type="transmembrane region" description="Helical" evidence="2">
    <location>
        <begin position="97"/>
        <end position="117"/>
    </location>
</feature>
<feature type="topological domain" description="Cytoplasmic" evidence="2">
    <location>
        <begin position="118"/>
        <end position="129"/>
    </location>
</feature>
<feature type="transmembrane region" description="Helical" evidence="2">
    <location>
        <begin position="130"/>
        <end position="150"/>
    </location>
</feature>
<feature type="topological domain" description="Extracellular" evidence="2">
    <location>
        <begin position="151"/>
        <end position="184"/>
    </location>
</feature>
<feature type="transmembrane region" description="Helical" evidence="2">
    <location>
        <begin position="185"/>
        <end position="205"/>
    </location>
</feature>
<feature type="topological domain" description="Cytoplasmic" evidence="2">
    <location>
        <begin position="206"/>
        <end position="208"/>
    </location>
</feature>
<feature type="region of interest" description="Disordered" evidence="3">
    <location>
        <begin position="1"/>
        <end position="23"/>
    </location>
</feature>
<feature type="compositionally biased region" description="Polar residues" evidence="3">
    <location>
        <begin position="8"/>
        <end position="18"/>
    </location>
</feature>
<organism>
    <name type="scientific">Triphysaria pusilla</name>
    <name type="common">Dwarf owl's-clover</name>
    <name type="synonym">Orthocarpus pusillus</name>
    <dbReference type="NCBI Taxonomy" id="188295"/>
    <lineage>
        <taxon>Eukaryota</taxon>
        <taxon>Viridiplantae</taxon>
        <taxon>Streptophyta</taxon>
        <taxon>Embryophyta</taxon>
        <taxon>Tracheophyta</taxon>
        <taxon>Spermatophyta</taxon>
        <taxon>Magnoliopsida</taxon>
        <taxon>eudicotyledons</taxon>
        <taxon>Gunneridae</taxon>
        <taxon>Pentapetalae</taxon>
        <taxon>asterids</taxon>
        <taxon>lamiids</taxon>
        <taxon>Lamiales</taxon>
        <taxon>Orobanchaceae</taxon>
        <taxon>Pedicularideae</taxon>
        <taxon>Castillejinae</taxon>
        <taxon>Triphysaria</taxon>
    </lineage>
</organism>